<dbReference type="EMBL" id="X17403">
    <property type="status" value="NOT_ANNOTATED_CDS"/>
    <property type="molecule type" value="Genomic_DNA"/>
</dbReference>
<dbReference type="EMBL" id="BK000394">
    <property type="protein sequence ID" value="DAA00152.1"/>
    <property type="molecule type" value="Genomic_DNA"/>
</dbReference>
<dbReference type="PDB" id="5VKU">
    <property type="method" value="EM"/>
    <property type="resolution" value="3.90 A"/>
    <property type="chains" value="Q/R/S/T/U/V/W/X/Y/Z/a/b/c/d/e/f=1-75"/>
</dbReference>
<dbReference type="PDB" id="7ET3">
    <property type="method" value="EM"/>
    <property type="resolution" value="4.20 A"/>
    <property type="chains" value="R/S/T/i/j=1-75"/>
</dbReference>
<dbReference type="PDB" id="7LIV">
    <property type="method" value="EM"/>
    <property type="resolution" value="3.60 A"/>
    <property type="chains" value="D/E/Z=1-75"/>
</dbReference>
<dbReference type="PDB" id="8TEP">
    <property type="method" value="EM"/>
    <property type="resolution" value="3.50 A"/>
    <property type="chains" value="N/O/P/Q/R/S=1-75"/>
</dbReference>
<dbReference type="PDB" id="8TES">
    <property type="method" value="EM"/>
    <property type="resolution" value="3.27 A"/>
    <property type="chains" value="N/O/P/Q/R/S=1-75"/>
</dbReference>
<dbReference type="PDB" id="8TET">
    <property type="method" value="EM"/>
    <property type="resolution" value="4.26 A"/>
    <property type="chains" value="N/O/P/Q/R/S=1-75"/>
</dbReference>
<dbReference type="PDB" id="8TEU">
    <property type="method" value="EM"/>
    <property type="resolution" value="4.01 A"/>
    <property type="chains" value="N/O/P/Q/R/S=1-75"/>
</dbReference>
<dbReference type="PDB" id="8TEW">
    <property type="method" value="EM"/>
    <property type="resolution" value="3.02 A"/>
    <property type="chains" value="2/N/O/P/Q/R/S=1-75"/>
</dbReference>
<dbReference type="PDBsum" id="5VKU"/>
<dbReference type="PDBsum" id="7ET3"/>
<dbReference type="PDBsum" id="7LIV"/>
<dbReference type="PDBsum" id="8TEP"/>
<dbReference type="PDBsum" id="8TES"/>
<dbReference type="PDBsum" id="8TET"/>
<dbReference type="PDBsum" id="8TEU"/>
<dbReference type="PDBsum" id="8TEW"/>
<dbReference type="EMDB" id="EMD-23386"/>
<dbReference type="EMDB" id="EMD-41194"/>
<dbReference type="EMDB" id="EMD-41200"/>
<dbReference type="EMDB" id="EMD-41201"/>
<dbReference type="EMDB" id="EMD-41202"/>
<dbReference type="EMDB" id="EMD-41204"/>
<dbReference type="EMDB" id="EMD-8703"/>
<dbReference type="SMR" id="Q7M6N6"/>
<dbReference type="IntAct" id="Q7M6N6">
    <property type="interactions" value="1"/>
</dbReference>
<dbReference type="Proteomes" id="UP000008991">
    <property type="component" value="Segment"/>
</dbReference>
<dbReference type="Proteomes" id="UP000008992">
    <property type="component" value="Segment"/>
</dbReference>
<dbReference type="GO" id="GO:0042025">
    <property type="term" value="C:host cell nucleus"/>
    <property type="evidence" value="ECO:0007669"/>
    <property type="project" value="UniProtKB-SubCell"/>
</dbReference>
<dbReference type="GO" id="GO:0019028">
    <property type="term" value="C:viral capsid"/>
    <property type="evidence" value="ECO:0007669"/>
    <property type="project" value="UniProtKB-UniRule"/>
</dbReference>
<dbReference type="GO" id="GO:0016032">
    <property type="term" value="P:viral process"/>
    <property type="evidence" value="ECO:0007669"/>
    <property type="project" value="UniProtKB-UniRule"/>
</dbReference>
<dbReference type="HAMAP" id="MF_04021">
    <property type="entry name" value="HSV_SCP_betahv"/>
    <property type="match status" value="1"/>
</dbReference>
<dbReference type="InterPro" id="IPR031385">
    <property type="entry name" value="HV_small_capsid"/>
</dbReference>
<dbReference type="Pfam" id="PF17086">
    <property type="entry name" value="HV_small_capsid"/>
    <property type="match status" value="1"/>
</dbReference>
<gene>
    <name evidence="1" type="primary">SCP</name>
    <name type="ordered locus">UL48A</name>
</gene>
<comment type="function">
    <text evidence="1">Participates in the assembly of the infectious particles by decorating the outer surface of the capsid shell and thus forming a layer between the capsid and the tegument. Complexes composed of the major capsid protein and small capsomere-interacting protein/SCP assemble together in the host cytoplasm and are translocated to the nucleus, where they accumulate and participate in capsid assembly.</text>
</comment>
<comment type="subunit">
    <text evidence="1">Interacts with the major capsid protein/MCP.</text>
</comment>
<comment type="subcellular location">
    <subcellularLocation>
        <location evidence="1">Virion</location>
    </subcellularLocation>
    <subcellularLocation>
        <location evidence="1">Host nucleus</location>
    </subcellularLocation>
</comment>
<comment type="similarity">
    <text evidence="1">Belongs to the herpesviridae small capsomere-interacting protein family.</text>
</comment>
<evidence type="ECO:0000255" key="1">
    <source>
        <dbReference type="HAMAP-Rule" id="MF_04021"/>
    </source>
</evidence>
<evidence type="ECO:0007829" key="2">
    <source>
        <dbReference type="PDB" id="8TES"/>
    </source>
</evidence>
<proteinExistence type="evidence at protein level"/>
<organismHost>
    <name type="scientific">Homo sapiens</name>
    <name type="common">Human</name>
    <dbReference type="NCBI Taxonomy" id="9606"/>
</organismHost>
<organism>
    <name type="scientific">Human cytomegalovirus (strain AD169)</name>
    <name type="common">HHV-5</name>
    <name type="synonym">Human herpesvirus 5</name>
    <dbReference type="NCBI Taxonomy" id="10360"/>
    <lineage>
        <taxon>Viruses</taxon>
        <taxon>Duplodnaviria</taxon>
        <taxon>Heunggongvirae</taxon>
        <taxon>Peploviricota</taxon>
        <taxon>Herviviricetes</taxon>
        <taxon>Herpesvirales</taxon>
        <taxon>Orthoherpesviridae</taxon>
        <taxon>Betaherpesvirinae</taxon>
        <taxon>Cytomegalovirus</taxon>
        <taxon>Cytomegalovirus humanbeta5</taxon>
        <taxon>Human cytomegalovirus</taxon>
    </lineage>
</organism>
<feature type="chain" id="PRO_0000115326" description="Small capsomere-interacting protein">
    <location>
        <begin position="1"/>
        <end position="75"/>
    </location>
</feature>
<feature type="helix" evidence="2">
    <location>
        <begin position="15"/>
        <end position="24"/>
    </location>
</feature>
<feature type="turn" evidence="2">
    <location>
        <begin position="34"/>
        <end position="36"/>
    </location>
</feature>
<feature type="helix" evidence="2">
    <location>
        <begin position="38"/>
        <end position="48"/>
    </location>
</feature>
<feature type="helix" evidence="2">
    <location>
        <begin position="57"/>
        <end position="72"/>
    </location>
</feature>
<name>SCP_HCMVA</name>
<protein>
    <recommendedName>
        <fullName evidence="1">Small capsomere-interacting protein</fullName>
    </recommendedName>
</protein>
<reference key="1">
    <citation type="journal article" date="1990" name="Curr. Top. Microbiol. Immunol.">
        <title>Analysis of the protein-coding content of the sequence of human cytomegalovirus strain AD169.</title>
        <authorList>
            <person name="Chee M.S."/>
            <person name="Bankier A.T."/>
            <person name="Beck S."/>
            <person name="Bohni R."/>
            <person name="Brown C.M."/>
            <person name="Cerny R."/>
            <person name="Horsnell T."/>
            <person name="Hutchison C.A. III"/>
            <person name="Kouzarides T."/>
            <person name="Martignetti J.A."/>
            <person name="Preddie E."/>
            <person name="Satchwell S.C."/>
            <person name="Tomlinson P."/>
            <person name="Weston K.M."/>
            <person name="Barrell B.G."/>
        </authorList>
    </citation>
    <scope>NUCLEOTIDE SEQUENCE [LARGE SCALE GENOMIC DNA]</scope>
</reference>
<reference key="2">
    <citation type="journal article" date="2003" name="J. Gen. Virol.">
        <title>The human cytomegalovirus genome revisited: comparison with the chimpanzee cytomegalovirus genome.</title>
        <authorList>
            <person name="Davison A.J."/>
            <person name="Dolan A."/>
            <person name="Akter P."/>
            <person name="Addison C."/>
            <person name="Dargan D.J."/>
            <person name="Alcendor D.J."/>
            <person name="McGeoch D.J."/>
            <person name="Hayward G.S."/>
        </authorList>
    </citation>
    <scope>GENOME REANNOTATION</scope>
</reference>
<reference key="3">
    <citation type="journal article" date="2003" name="J. Gen. Virol.">
        <authorList>
            <person name="Davison A.J."/>
            <person name="Dolan A."/>
            <person name="Akter P."/>
            <person name="Addison C."/>
            <person name="Dargan D.J."/>
            <person name="Alcendor D.J."/>
            <person name="McGeoch D.J."/>
            <person name="Hayward G.S."/>
        </authorList>
    </citation>
    <scope>ERRATUM OF PUBMED:12533697</scope>
</reference>
<keyword id="KW-0002">3D-structure</keyword>
<keyword id="KW-0167">Capsid protein</keyword>
<keyword id="KW-1048">Host nucleus</keyword>
<keyword id="KW-1185">Reference proteome</keyword>
<keyword id="KW-0946">Virion</keyword>
<accession>Q7M6N6</accession>
<sequence>MSNTAPGPTVANKRDEKHRHVVNVVLELPTEISEATHPVLATMLSKYTRMSSLFNDKCAFKLDLLRMVAVSRTRR</sequence>